<proteinExistence type="inferred from homology"/>
<accession>Q54QV0</accession>
<keyword id="KW-0479">Metal-binding</keyword>
<keyword id="KW-1185">Reference proteome</keyword>
<keyword id="KW-0862">Zinc</keyword>
<gene>
    <name type="primary">mob2</name>
    <name type="ORF">DDB_G0283625</name>
</gene>
<organism>
    <name type="scientific">Dictyostelium discoideum</name>
    <name type="common">Social amoeba</name>
    <dbReference type="NCBI Taxonomy" id="44689"/>
    <lineage>
        <taxon>Eukaryota</taxon>
        <taxon>Amoebozoa</taxon>
        <taxon>Evosea</taxon>
        <taxon>Eumycetozoa</taxon>
        <taxon>Dictyostelia</taxon>
        <taxon>Dictyosteliales</taxon>
        <taxon>Dictyosteliaceae</taxon>
        <taxon>Dictyostelium</taxon>
    </lineage>
</organism>
<comment type="similarity">
    <text evidence="3">Belongs to the MOB1/phocein family.</text>
</comment>
<evidence type="ECO:0000250" key="1"/>
<evidence type="ECO:0000256" key="2">
    <source>
        <dbReference type="SAM" id="MobiDB-lite"/>
    </source>
</evidence>
<evidence type="ECO:0000305" key="3"/>
<sequence>MTLFSSLLSRVSKDGKESIRGNYKPKKHPRGSSRHTMRKSLKKNLAGGTVLKESVKCPDGEDENEWIAVNTIEIFNTMNMCYSFIQGFCTEASCPQMTGAKATYLWTDGKGKPQELSAPQYIDNLVNWISEQIDNPEIFPVDDSDFPKNYRPAVIKIISRVLRVYAHIYHAHWDHIQKLDCYQHTNTSLKHLQYFAEHFSLIGEKDLAVMKHVFDTL</sequence>
<name>MOB2_DICDI</name>
<dbReference type="EMBL" id="AAFI02000056">
    <property type="protein sequence ID" value="EAL65579.1"/>
    <property type="molecule type" value="Genomic_DNA"/>
</dbReference>
<dbReference type="RefSeq" id="XP_638923.1">
    <property type="nucleotide sequence ID" value="XM_633831.1"/>
</dbReference>
<dbReference type="SMR" id="Q54QV0"/>
<dbReference type="STRING" id="44689.Q54QV0"/>
<dbReference type="PaxDb" id="44689-DDB0232219"/>
<dbReference type="EnsemblProtists" id="EAL65579">
    <property type="protein sequence ID" value="EAL65579"/>
    <property type="gene ID" value="DDB_G0283625"/>
</dbReference>
<dbReference type="GeneID" id="8624162"/>
<dbReference type="KEGG" id="ddi:DDB_G0283625"/>
<dbReference type="dictyBase" id="DDB_G0283625"/>
<dbReference type="VEuPathDB" id="AmoebaDB:DDB_G0283625"/>
<dbReference type="eggNOG" id="KOG0440">
    <property type="taxonomic scope" value="Eukaryota"/>
</dbReference>
<dbReference type="HOGENOM" id="CLU_038321_3_1_1"/>
<dbReference type="InParanoid" id="Q54QV0"/>
<dbReference type="OMA" id="KATYLWT"/>
<dbReference type="PhylomeDB" id="Q54QV0"/>
<dbReference type="PRO" id="PR:Q54QV0"/>
<dbReference type="Proteomes" id="UP000002195">
    <property type="component" value="Chromosome 4"/>
</dbReference>
<dbReference type="GO" id="GO:0005737">
    <property type="term" value="C:cytoplasm"/>
    <property type="evidence" value="ECO:0000318"/>
    <property type="project" value="GO_Central"/>
</dbReference>
<dbReference type="GO" id="GO:0005634">
    <property type="term" value="C:nucleus"/>
    <property type="evidence" value="ECO:0000318"/>
    <property type="project" value="GO_Central"/>
</dbReference>
<dbReference type="GO" id="GO:0046872">
    <property type="term" value="F:metal ion binding"/>
    <property type="evidence" value="ECO:0007669"/>
    <property type="project" value="UniProtKB-KW"/>
</dbReference>
<dbReference type="GO" id="GO:0030295">
    <property type="term" value="F:protein kinase activator activity"/>
    <property type="evidence" value="ECO:0000318"/>
    <property type="project" value="GO_Central"/>
</dbReference>
<dbReference type="GO" id="GO:0007165">
    <property type="term" value="P:signal transduction"/>
    <property type="evidence" value="ECO:0000318"/>
    <property type="project" value="GO_Central"/>
</dbReference>
<dbReference type="Gene3D" id="1.20.140.30">
    <property type="entry name" value="MOB kinase activator"/>
    <property type="match status" value="1"/>
</dbReference>
<dbReference type="InterPro" id="IPR005301">
    <property type="entry name" value="MOB_kinase_act_fam"/>
</dbReference>
<dbReference type="InterPro" id="IPR036703">
    <property type="entry name" value="MOB_kinase_act_sf"/>
</dbReference>
<dbReference type="PANTHER" id="PTHR22599">
    <property type="entry name" value="MPS ONE BINDER KINASE ACTIVATOR-LIKE MOB"/>
    <property type="match status" value="1"/>
</dbReference>
<dbReference type="Pfam" id="PF03637">
    <property type="entry name" value="Mob1_phocein"/>
    <property type="match status" value="1"/>
</dbReference>
<dbReference type="SMART" id="SM01388">
    <property type="entry name" value="Mob1_phocein"/>
    <property type="match status" value="1"/>
</dbReference>
<dbReference type="SUPFAM" id="SSF101152">
    <property type="entry name" value="Mob1/phocein"/>
    <property type="match status" value="1"/>
</dbReference>
<feature type="chain" id="PRO_0000328577" description="MOB kinase activator-like 2">
    <location>
        <begin position="1"/>
        <end position="217"/>
    </location>
</feature>
<feature type="region of interest" description="Disordered" evidence="2">
    <location>
        <begin position="15"/>
        <end position="38"/>
    </location>
</feature>
<feature type="compositionally biased region" description="Basic residues" evidence="2">
    <location>
        <begin position="23"/>
        <end position="38"/>
    </location>
</feature>
<feature type="binding site" evidence="1">
    <location>
        <position position="89"/>
    </location>
    <ligand>
        <name>Zn(2+)</name>
        <dbReference type="ChEBI" id="CHEBI:29105"/>
    </ligand>
</feature>
<feature type="binding site" evidence="1">
    <location>
        <position position="94"/>
    </location>
    <ligand>
        <name>Zn(2+)</name>
        <dbReference type="ChEBI" id="CHEBI:29105"/>
    </ligand>
</feature>
<feature type="binding site" evidence="1">
    <location>
        <position position="167"/>
    </location>
    <ligand>
        <name>Zn(2+)</name>
        <dbReference type="ChEBI" id="CHEBI:29105"/>
    </ligand>
</feature>
<feature type="binding site" evidence="1">
    <location>
        <position position="172"/>
    </location>
    <ligand>
        <name>Zn(2+)</name>
        <dbReference type="ChEBI" id="CHEBI:29105"/>
    </ligand>
</feature>
<reference key="1">
    <citation type="journal article" date="2005" name="Nature">
        <title>The genome of the social amoeba Dictyostelium discoideum.</title>
        <authorList>
            <person name="Eichinger L."/>
            <person name="Pachebat J.A."/>
            <person name="Gloeckner G."/>
            <person name="Rajandream M.A."/>
            <person name="Sucgang R."/>
            <person name="Berriman M."/>
            <person name="Song J."/>
            <person name="Olsen R."/>
            <person name="Szafranski K."/>
            <person name="Xu Q."/>
            <person name="Tunggal B."/>
            <person name="Kummerfeld S."/>
            <person name="Madera M."/>
            <person name="Konfortov B.A."/>
            <person name="Rivero F."/>
            <person name="Bankier A.T."/>
            <person name="Lehmann R."/>
            <person name="Hamlin N."/>
            <person name="Davies R."/>
            <person name="Gaudet P."/>
            <person name="Fey P."/>
            <person name="Pilcher K."/>
            <person name="Chen G."/>
            <person name="Saunders D."/>
            <person name="Sodergren E.J."/>
            <person name="Davis P."/>
            <person name="Kerhornou A."/>
            <person name="Nie X."/>
            <person name="Hall N."/>
            <person name="Anjard C."/>
            <person name="Hemphill L."/>
            <person name="Bason N."/>
            <person name="Farbrother P."/>
            <person name="Desany B."/>
            <person name="Just E."/>
            <person name="Morio T."/>
            <person name="Rost R."/>
            <person name="Churcher C.M."/>
            <person name="Cooper J."/>
            <person name="Haydock S."/>
            <person name="van Driessche N."/>
            <person name="Cronin A."/>
            <person name="Goodhead I."/>
            <person name="Muzny D.M."/>
            <person name="Mourier T."/>
            <person name="Pain A."/>
            <person name="Lu M."/>
            <person name="Harper D."/>
            <person name="Lindsay R."/>
            <person name="Hauser H."/>
            <person name="James K.D."/>
            <person name="Quiles M."/>
            <person name="Madan Babu M."/>
            <person name="Saito T."/>
            <person name="Buchrieser C."/>
            <person name="Wardroper A."/>
            <person name="Felder M."/>
            <person name="Thangavelu M."/>
            <person name="Johnson D."/>
            <person name="Knights A."/>
            <person name="Loulseged H."/>
            <person name="Mungall K.L."/>
            <person name="Oliver K."/>
            <person name="Price C."/>
            <person name="Quail M.A."/>
            <person name="Urushihara H."/>
            <person name="Hernandez J."/>
            <person name="Rabbinowitsch E."/>
            <person name="Steffen D."/>
            <person name="Sanders M."/>
            <person name="Ma J."/>
            <person name="Kohara Y."/>
            <person name="Sharp S."/>
            <person name="Simmonds M.N."/>
            <person name="Spiegler S."/>
            <person name="Tivey A."/>
            <person name="Sugano S."/>
            <person name="White B."/>
            <person name="Walker D."/>
            <person name="Woodward J.R."/>
            <person name="Winckler T."/>
            <person name="Tanaka Y."/>
            <person name="Shaulsky G."/>
            <person name="Schleicher M."/>
            <person name="Weinstock G.M."/>
            <person name="Rosenthal A."/>
            <person name="Cox E.C."/>
            <person name="Chisholm R.L."/>
            <person name="Gibbs R.A."/>
            <person name="Loomis W.F."/>
            <person name="Platzer M."/>
            <person name="Kay R.R."/>
            <person name="Williams J.G."/>
            <person name="Dear P.H."/>
            <person name="Noegel A.A."/>
            <person name="Barrell B.G."/>
            <person name="Kuspa A."/>
        </authorList>
    </citation>
    <scope>NUCLEOTIDE SEQUENCE [LARGE SCALE GENOMIC DNA]</scope>
    <source>
        <strain>AX4</strain>
    </source>
</reference>
<protein>
    <recommendedName>
        <fullName>MOB kinase activator-like 2</fullName>
    </recommendedName>
    <alternativeName>
        <fullName>Mob2 homolog</fullName>
    </alternativeName>
    <alternativeName>
        <fullName>Mps one binder kinase activator-like 2</fullName>
    </alternativeName>
</protein>